<evidence type="ECO:0000255" key="1">
    <source>
        <dbReference type="HAMAP-Rule" id="MF_00163"/>
    </source>
</evidence>
<keyword id="KW-0378">Hydrolase</keyword>
<keyword id="KW-0408">Iron</keyword>
<keyword id="KW-0479">Metal-binding</keyword>
<keyword id="KW-0648">Protein biosynthesis</keyword>
<keyword id="KW-1185">Reference proteome</keyword>
<organism>
    <name type="scientific">Pectobacterium atrosepticum (strain SCRI 1043 / ATCC BAA-672)</name>
    <name type="common">Erwinia carotovora subsp. atroseptica</name>
    <dbReference type="NCBI Taxonomy" id="218491"/>
    <lineage>
        <taxon>Bacteria</taxon>
        <taxon>Pseudomonadati</taxon>
        <taxon>Pseudomonadota</taxon>
        <taxon>Gammaproteobacteria</taxon>
        <taxon>Enterobacterales</taxon>
        <taxon>Pectobacteriaceae</taxon>
        <taxon>Pectobacterium</taxon>
    </lineage>
</organism>
<proteinExistence type="inferred from homology"/>
<name>DEF_PECAS</name>
<protein>
    <recommendedName>
        <fullName evidence="1">Peptide deformylase</fullName>
        <shortName evidence="1">PDF</shortName>
        <ecNumber evidence="1">3.5.1.88</ecNumber>
    </recommendedName>
    <alternativeName>
        <fullName evidence="1">Polypeptide deformylase</fullName>
    </alternativeName>
</protein>
<comment type="function">
    <text evidence="1">Removes the formyl group from the N-terminal Met of newly synthesized proteins. Requires at least a dipeptide for an efficient rate of reaction. N-terminal L-methionine is a prerequisite for activity but the enzyme has broad specificity at other positions.</text>
</comment>
<comment type="catalytic activity">
    <reaction evidence="1">
        <text>N-terminal N-formyl-L-methionyl-[peptide] + H2O = N-terminal L-methionyl-[peptide] + formate</text>
        <dbReference type="Rhea" id="RHEA:24420"/>
        <dbReference type="Rhea" id="RHEA-COMP:10639"/>
        <dbReference type="Rhea" id="RHEA-COMP:10640"/>
        <dbReference type="ChEBI" id="CHEBI:15377"/>
        <dbReference type="ChEBI" id="CHEBI:15740"/>
        <dbReference type="ChEBI" id="CHEBI:49298"/>
        <dbReference type="ChEBI" id="CHEBI:64731"/>
        <dbReference type="EC" id="3.5.1.88"/>
    </reaction>
</comment>
<comment type="cofactor">
    <cofactor evidence="1">
        <name>Fe(2+)</name>
        <dbReference type="ChEBI" id="CHEBI:29033"/>
    </cofactor>
    <text evidence="1">Binds 1 Fe(2+) ion.</text>
</comment>
<comment type="similarity">
    <text evidence="1">Belongs to the polypeptide deformylase family.</text>
</comment>
<feature type="chain" id="PRO_0000301028" description="Peptide deformylase">
    <location>
        <begin position="1"/>
        <end position="169"/>
    </location>
</feature>
<feature type="active site" evidence="1">
    <location>
        <position position="134"/>
    </location>
</feature>
<feature type="binding site" evidence="1">
    <location>
        <position position="91"/>
    </location>
    <ligand>
        <name>Fe cation</name>
        <dbReference type="ChEBI" id="CHEBI:24875"/>
    </ligand>
</feature>
<feature type="binding site" evidence="1">
    <location>
        <position position="133"/>
    </location>
    <ligand>
        <name>Fe cation</name>
        <dbReference type="ChEBI" id="CHEBI:24875"/>
    </ligand>
</feature>
<feature type="binding site" evidence="1">
    <location>
        <position position="137"/>
    </location>
    <ligand>
        <name>Fe cation</name>
        <dbReference type="ChEBI" id="CHEBI:24875"/>
    </ligand>
</feature>
<gene>
    <name evidence="1" type="primary">def</name>
    <name type="ordered locus">ECA3999</name>
</gene>
<dbReference type="EC" id="3.5.1.88" evidence="1"/>
<dbReference type="EMBL" id="BX950851">
    <property type="protein sequence ID" value="CAG76896.1"/>
    <property type="molecule type" value="Genomic_DNA"/>
</dbReference>
<dbReference type="RefSeq" id="WP_011095493.1">
    <property type="nucleotide sequence ID" value="NC_004547.2"/>
</dbReference>
<dbReference type="SMR" id="Q6D002"/>
<dbReference type="STRING" id="218491.ECA3999"/>
<dbReference type="GeneID" id="57210663"/>
<dbReference type="KEGG" id="eca:ECA3999"/>
<dbReference type="PATRIC" id="fig|218491.5.peg.4065"/>
<dbReference type="eggNOG" id="COG0242">
    <property type="taxonomic scope" value="Bacteria"/>
</dbReference>
<dbReference type="HOGENOM" id="CLU_061901_2_1_6"/>
<dbReference type="OrthoDB" id="9804313at2"/>
<dbReference type="Proteomes" id="UP000007966">
    <property type="component" value="Chromosome"/>
</dbReference>
<dbReference type="GO" id="GO:0046872">
    <property type="term" value="F:metal ion binding"/>
    <property type="evidence" value="ECO:0007669"/>
    <property type="project" value="UniProtKB-KW"/>
</dbReference>
<dbReference type="GO" id="GO:0042586">
    <property type="term" value="F:peptide deformylase activity"/>
    <property type="evidence" value="ECO:0007669"/>
    <property type="project" value="UniProtKB-UniRule"/>
</dbReference>
<dbReference type="GO" id="GO:0043686">
    <property type="term" value="P:co-translational protein modification"/>
    <property type="evidence" value="ECO:0007669"/>
    <property type="project" value="TreeGrafter"/>
</dbReference>
<dbReference type="GO" id="GO:0006412">
    <property type="term" value="P:translation"/>
    <property type="evidence" value="ECO:0007669"/>
    <property type="project" value="UniProtKB-UniRule"/>
</dbReference>
<dbReference type="CDD" id="cd00487">
    <property type="entry name" value="Pep_deformylase"/>
    <property type="match status" value="1"/>
</dbReference>
<dbReference type="FunFam" id="3.90.45.10:FF:000001">
    <property type="entry name" value="Peptide deformylase"/>
    <property type="match status" value="1"/>
</dbReference>
<dbReference type="Gene3D" id="3.90.45.10">
    <property type="entry name" value="Peptide deformylase"/>
    <property type="match status" value="1"/>
</dbReference>
<dbReference type="HAMAP" id="MF_00163">
    <property type="entry name" value="Pep_deformylase"/>
    <property type="match status" value="1"/>
</dbReference>
<dbReference type="InterPro" id="IPR023635">
    <property type="entry name" value="Peptide_deformylase"/>
</dbReference>
<dbReference type="InterPro" id="IPR036821">
    <property type="entry name" value="Peptide_deformylase_sf"/>
</dbReference>
<dbReference type="NCBIfam" id="TIGR00079">
    <property type="entry name" value="pept_deformyl"/>
    <property type="match status" value="1"/>
</dbReference>
<dbReference type="NCBIfam" id="NF001159">
    <property type="entry name" value="PRK00150.1-3"/>
    <property type="match status" value="1"/>
</dbReference>
<dbReference type="PANTHER" id="PTHR10458">
    <property type="entry name" value="PEPTIDE DEFORMYLASE"/>
    <property type="match status" value="1"/>
</dbReference>
<dbReference type="PANTHER" id="PTHR10458:SF21">
    <property type="entry name" value="PEPTIDE DEFORMYLASE"/>
    <property type="match status" value="1"/>
</dbReference>
<dbReference type="Pfam" id="PF01327">
    <property type="entry name" value="Pep_deformylase"/>
    <property type="match status" value="1"/>
</dbReference>
<dbReference type="PIRSF" id="PIRSF004749">
    <property type="entry name" value="Pep_def"/>
    <property type="match status" value="1"/>
</dbReference>
<dbReference type="PRINTS" id="PR01576">
    <property type="entry name" value="PDEFORMYLASE"/>
</dbReference>
<dbReference type="SUPFAM" id="SSF56420">
    <property type="entry name" value="Peptide deformylase"/>
    <property type="match status" value="1"/>
</dbReference>
<sequence length="169" mass="19377">MSVLQVLHFPDERLRITAQPVKEVNADIQRIVDDMFDTMYEEEGIGLAATQVDIHQRIIVIDVSEERDQRLVLINPELIEKSGDTGIEEGCLSIPETRALVPRAEHVKVRALDREGKAFELEASELLAICIQHEMDHLVGKLFIDYLSPLKRQRIRQKLEKLAKQNSRT</sequence>
<reference key="1">
    <citation type="journal article" date="2004" name="Proc. Natl. Acad. Sci. U.S.A.">
        <title>Genome sequence of the enterobacterial phytopathogen Erwinia carotovora subsp. atroseptica and characterization of virulence factors.</title>
        <authorList>
            <person name="Bell K.S."/>
            <person name="Sebaihia M."/>
            <person name="Pritchard L."/>
            <person name="Holden M.T.G."/>
            <person name="Hyman L.J."/>
            <person name="Holeva M.C."/>
            <person name="Thomson N.R."/>
            <person name="Bentley S.D."/>
            <person name="Churcher L.J.C."/>
            <person name="Mungall K."/>
            <person name="Atkin R."/>
            <person name="Bason N."/>
            <person name="Brooks K."/>
            <person name="Chillingworth T."/>
            <person name="Clark K."/>
            <person name="Doggett J."/>
            <person name="Fraser A."/>
            <person name="Hance Z."/>
            <person name="Hauser H."/>
            <person name="Jagels K."/>
            <person name="Moule S."/>
            <person name="Norbertczak H."/>
            <person name="Ormond D."/>
            <person name="Price C."/>
            <person name="Quail M.A."/>
            <person name="Sanders M."/>
            <person name="Walker D."/>
            <person name="Whitehead S."/>
            <person name="Salmond G.P.C."/>
            <person name="Birch P.R.J."/>
            <person name="Parkhill J."/>
            <person name="Toth I.K."/>
        </authorList>
    </citation>
    <scope>NUCLEOTIDE SEQUENCE [LARGE SCALE GENOMIC DNA]</scope>
    <source>
        <strain>SCRI 1043 / ATCC BAA-672</strain>
    </source>
</reference>
<accession>Q6D002</accession>